<sequence>MAGEGALQFYRDLPKVELHAHLNGSISTATMKKLMARKPHLDIQHGMTMIDKGQKRTLEECFQMFKIIHQITDTAEDILLVTKDVIKEFAADGVKYLELRSTPRDTPAGLTKQAYVETVLEGIKQCKEEGVDIDVRFLLAIDRRGGPTAAKETVKLAEDFFCSSNELVLGLDLSGDPTVGHGRDFMEPLNKARQSGLKLALHLSEIPSQTEETELLLGLPPDRIGHGTFLTTSAHIVEIVKKQHIPLELCITSNIKGQTVSSYNEHHFGFWYNLHHPFVLCTDDKGVFATDLSVEYEIAAKTFNLTPHHVWDLSYQAIDYTFASADVKANLKEKWLLLKPDVFRHAL</sequence>
<organism>
    <name type="scientific">Xenopus laevis</name>
    <name type="common">African clawed frog</name>
    <dbReference type="NCBI Taxonomy" id="8355"/>
    <lineage>
        <taxon>Eukaryota</taxon>
        <taxon>Metazoa</taxon>
        <taxon>Chordata</taxon>
        <taxon>Craniata</taxon>
        <taxon>Vertebrata</taxon>
        <taxon>Euteleostomi</taxon>
        <taxon>Amphibia</taxon>
        <taxon>Batrachia</taxon>
        <taxon>Anura</taxon>
        <taxon>Pipoidea</taxon>
        <taxon>Pipidae</taxon>
        <taxon>Xenopodinae</taxon>
        <taxon>Xenopus</taxon>
        <taxon>Xenopus</taxon>
    </lineage>
</organism>
<reference key="1">
    <citation type="submission" date="2005-06" db="EMBL/GenBank/DDBJ databases">
        <authorList>
            <consortium name="NIH - Xenopus Gene Collection (XGC) project"/>
        </authorList>
    </citation>
    <scope>NUCLEOTIDE SEQUENCE [LARGE SCALE MRNA]</scope>
    <source>
        <tissue>Embryo</tissue>
    </source>
</reference>
<accession>Q4V831</accession>
<accession>Q6GN35</accession>
<comment type="function">
    <text evidence="2">Catalyzes the hydrolysis of the free cytosolic methylated adenosine nucleotide N(6)-methyl-AMP (N6-mAMP) to produce inositol monophosphate (IMP) and methylamine. Is required for the catabolism of cytosolic N6-mAMP, which is derived from the degradation of mRNA containing N6-methylated adenine (m6A).</text>
</comment>
<comment type="catalytic activity">
    <reaction evidence="2">
        <text>N(6)-methyl-AMP + H2O + H(+) = IMP + methylamine</text>
        <dbReference type="Rhea" id="RHEA:16001"/>
        <dbReference type="ChEBI" id="CHEBI:15377"/>
        <dbReference type="ChEBI" id="CHEBI:15378"/>
        <dbReference type="ChEBI" id="CHEBI:58053"/>
        <dbReference type="ChEBI" id="CHEBI:59338"/>
        <dbReference type="ChEBI" id="CHEBI:144842"/>
    </reaction>
    <physiologicalReaction direction="left-to-right" evidence="2">
        <dbReference type="Rhea" id="RHEA:16002"/>
    </physiologicalReaction>
</comment>
<comment type="cofactor">
    <cofactor evidence="2">
        <name>Zn(2+)</name>
        <dbReference type="ChEBI" id="CHEBI:29105"/>
    </cofactor>
    <text evidence="2">Binds 1 zinc ion per subunit.</text>
</comment>
<comment type="subunit">
    <text evidence="2">Monomer.</text>
</comment>
<comment type="similarity">
    <text evidence="4">Belongs to the metallo-dependent hydrolases superfamily. Adenosine and AMP deaminases family.</text>
</comment>
<comment type="sequence caution" evidence="4">
    <conflict type="erroneous initiation">
        <sequence resource="EMBL-CDS" id="AAH73685"/>
    </conflict>
    <text>Extended N-terminus.</text>
</comment>
<name>ADALA_XENLA</name>
<keyword id="KW-0378">Hydrolase</keyword>
<keyword id="KW-0479">Metal-binding</keyword>
<keyword id="KW-0546">Nucleotide metabolism</keyword>
<keyword id="KW-1185">Reference proteome</keyword>
<keyword id="KW-0862">Zinc</keyword>
<evidence type="ECO:0000250" key="1">
    <source>
        <dbReference type="UniProtKB" id="P03958"/>
    </source>
</evidence>
<evidence type="ECO:0000250" key="2">
    <source>
        <dbReference type="UniProtKB" id="Q6DHV7"/>
    </source>
</evidence>
<evidence type="ECO:0000250" key="3">
    <source>
        <dbReference type="UniProtKB" id="Q8LPL7"/>
    </source>
</evidence>
<evidence type="ECO:0000305" key="4"/>
<protein>
    <recommendedName>
        <fullName evidence="2">N6-Methyl-AMP deaminase-L</fullName>
        <ecNumber evidence="2">3.5.4.-</ecNumber>
    </recommendedName>
    <alternativeName>
        <fullName>Adenosine deaminase-like protein A</fullName>
    </alternativeName>
</protein>
<dbReference type="EC" id="3.5.4.-" evidence="2"/>
<dbReference type="EMBL" id="BC073685">
    <property type="protein sequence ID" value="AAH73685.1"/>
    <property type="status" value="ALT_INIT"/>
    <property type="molecule type" value="mRNA"/>
</dbReference>
<dbReference type="EMBL" id="BC097573">
    <property type="protein sequence ID" value="AAH97573.1"/>
    <property type="molecule type" value="mRNA"/>
</dbReference>
<dbReference type="RefSeq" id="NP_001085299.1">
    <property type="nucleotide sequence ID" value="NM_001091830.1"/>
</dbReference>
<dbReference type="SMR" id="Q4V831"/>
<dbReference type="DNASU" id="443687"/>
<dbReference type="GeneID" id="443687"/>
<dbReference type="KEGG" id="xla:443687"/>
<dbReference type="AGR" id="Xenbase:XB-GENE-5873474"/>
<dbReference type="CTD" id="443687"/>
<dbReference type="Xenbase" id="XB-GENE-5873474">
    <property type="gene designation" value="mapda.L"/>
</dbReference>
<dbReference type="OMA" id="RPQFKPY"/>
<dbReference type="OrthoDB" id="272271at2759"/>
<dbReference type="Proteomes" id="UP000186698">
    <property type="component" value="Chromosome 3L"/>
</dbReference>
<dbReference type="Bgee" id="443687">
    <property type="expression patterns" value="Expressed in muscle tissue and 20 other cell types or tissues"/>
</dbReference>
<dbReference type="GO" id="GO:0004000">
    <property type="term" value="F:adenosine deaminase activity"/>
    <property type="evidence" value="ECO:0000318"/>
    <property type="project" value="GO_Central"/>
</dbReference>
<dbReference type="GO" id="GO:0046872">
    <property type="term" value="F:metal ion binding"/>
    <property type="evidence" value="ECO:0007669"/>
    <property type="project" value="UniProtKB-KW"/>
</dbReference>
<dbReference type="GO" id="GO:0062154">
    <property type="term" value="F:N6-methyl-AMP deaminase activity"/>
    <property type="evidence" value="ECO:0007669"/>
    <property type="project" value="RHEA"/>
</dbReference>
<dbReference type="GO" id="GO:0006154">
    <property type="term" value="P:adenosine catabolic process"/>
    <property type="evidence" value="ECO:0000318"/>
    <property type="project" value="GO_Central"/>
</dbReference>
<dbReference type="GO" id="GO:0046103">
    <property type="term" value="P:inosine biosynthetic process"/>
    <property type="evidence" value="ECO:0000318"/>
    <property type="project" value="GO_Central"/>
</dbReference>
<dbReference type="GO" id="GO:0009117">
    <property type="term" value="P:nucleotide metabolic process"/>
    <property type="evidence" value="ECO:0007669"/>
    <property type="project" value="UniProtKB-KW"/>
</dbReference>
<dbReference type="CDD" id="cd00443">
    <property type="entry name" value="ADA_AMPD"/>
    <property type="match status" value="1"/>
</dbReference>
<dbReference type="FunFam" id="3.20.20.140:FF:000033">
    <property type="entry name" value="Adenosine deaminase-like protein"/>
    <property type="match status" value="1"/>
</dbReference>
<dbReference type="Gene3D" id="3.20.20.140">
    <property type="entry name" value="Metal-dependent hydrolases"/>
    <property type="match status" value="1"/>
</dbReference>
<dbReference type="InterPro" id="IPR001365">
    <property type="entry name" value="A_deaminase_dom"/>
</dbReference>
<dbReference type="InterPro" id="IPR006330">
    <property type="entry name" value="Ado/ade_deaminase"/>
</dbReference>
<dbReference type="InterPro" id="IPR032466">
    <property type="entry name" value="Metal_Hydrolase"/>
</dbReference>
<dbReference type="PANTHER" id="PTHR11409">
    <property type="entry name" value="ADENOSINE DEAMINASE"/>
    <property type="match status" value="1"/>
</dbReference>
<dbReference type="PANTHER" id="PTHR11409:SF42">
    <property type="entry name" value="ADENOSINE DEAMINASE-LIKE PROTEIN"/>
    <property type="match status" value="1"/>
</dbReference>
<dbReference type="Pfam" id="PF00962">
    <property type="entry name" value="A_deaminase"/>
    <property type="match status" value="1"/>
</dbReference>
<dbReference type="SUPFAM" id="SSF51556">
    <property type="entry name" value="Metallo-dependent hydrolases"/>
    <property type="match status" value="1"/>
</dbReference>
<feature type="chain" id="PRO_0000285093" description="N6-Methyl-AMP deaminase-L">
    <location>
        <begin position="1"/>
        <end position="347"/>
    </location>
</feature>
<feature type="active site" description="Proton donor" evidence="1">
    <location>
        <position position="205"/>
    </location>
</feature>
<feature type="binding site" evidence="3">
    <location>
        <position position="19"/>
    </location>
    <ligand>
        <name>Zn(2+)</name>
        <dbReference type="ChEBI" id="CHEBI:29105"/>
        <note>catalytic</note>
    </ligand>
</feature>
<feature type="binding site" evidence="3">
    <location>
        <position position="21"/>
    </location>
    <ligand>
        <name>N(6)-methyl-AMP</name>
        <dbReference type="ChEBI" id="CHEBI:144842"/>
    </ligand>
</feature>
<feature type="binding site" evidence="3">
    <location>
        <position position="21"/>
    </location>
    <ligand>
        <name>Zn(2+)</name>
        <dbReference type="ChEBI" id="CHEBI:29105"/>
        <note>catalytic</note>
    </ligand>
</feature>
<feature type="binding site" evidence="3">
    <location>
        <position position="23"/>
    </location>
    <ligand>
        <name>N(6)-methyl-AMP</name>
        <dbReference type="ChEBI" id="CHEBI:144842"/>
    </ligand>
</feature>
<feature type="binding site" evidence="3">
    <location>
        <position position="69"/>
    </location>
    <ligand>
        <name>N(6)-methyl-AMP</name>
        <dbReference type="ChEBI" id="CHEBI:144842"/>
    </ligand>
</feature>
<feature type="binding site" evidence="3">
    <location>
        <begin position="101"/>
        <end position="104"/>
    </location>
    <ligand>
        <name>N(6)-methyl-AMP</name>
        <dbReference type="ChEBI" id="CHEBI:144842"/>
    </ligand>
</feature>
<feature type="binding site" evidence="3">
    <location>
        <position position="142"/>
    </location>
    <ligand>
        <name>N(6)-methyl-AMP</name>
        <dbReference type="ChEBI" id="CHEBI:144842"/>
    </ligand>
</feature>
<feature type="binding site" evidence="3">
    <location>
        <position position="175"/>
    </location>
    <ligand>
        <name>N(6)-methyl-AMP</name>
        <dbReference type="ChEBI" id="CHEBI:144842"/>
    </ligand>
</feature>
<feature type="binding site" evidence="3">
    <location>
        <position position="202"/>
    </location>
    <ligand>
        <name>Zn(2+)</name>
        <dbReference type="ChEBI" id="CHEBI:29105"/>
        <note>catalytic</note>
    </ligand>
</feature>
<feature type="binding site" evidence="3">
    <location>
        <position position="205"/>
    </location>
    <ligand>
        <name>N(6)-methyl-AMP</name>
        <dbReference type="ChEBI" id="CHEBI:144842"/>
    </ligand>
</feature>
<feature type="binding site" evidence="3">
    <location>
        <position position="283"/>
    </location>
    <ligand>
        <name>N(6)-methyl-AMP</name>
        <dbReference type="ChEBI" id="CHEBI:144842"/>
    </ligand>
</feature>
<feature type="binding site" evidence="3">
    <location>
        <position position="283"/>
    </location>
    <ligand>
        <name>Zn(2+)</name>
        <dbReference type="ChEBI" id="CHEBI:29105"/>
        <note>catalytic</note>
    </ligand>
</feature>
<feature type="binding site" evidence="3">
    <location>
        <position position="284"/>
    </location>
    <ligand>
        <name>N(6)-methyl-AMP</name>
        <dbReference type="ChEBI" id="CHEBI:144842"/>
    </ligand>
</feature>
<feature type="site" description="Important for catalytic activity" evidence="1">
    <location>
        <position position="226"/>
    </location>
</feature>
<proteinExistence type="evidence at transcript level"/>
<gene>
    <name type="primary">mapda.L</name>
    <name type="synonym">adal-a</name>
    <name type="synonym">adal.L</name>
</gene>